<evidence type="ECO:0000250" key="1"/>
<evidence type="ECO:0000255" key="2"/>
<evidence type="ECO:0000305" key="3"/>
<keyword id="KW-0125">Carotenoid biosynthesis</keyword>
<keyword id="KW-1003">Cell membrane</keyword>
<keyword id="KW-0328">Glycosyltransferase</keyword>
<keyword id="KW-0472">Membrane</keyword>
<keyword id="KW-0808">Transferase</keyword>
<keyword id="KW-0812">Transmembrane</keyword>
<keyword id="KW-1133">Transmembrane helix</keyword>
<protein>
    <recommendedName>
        <fullName>4,4'-diaponeurosporenoate glycosyltransferase</fullName>
        <ecNumber>2.4.1.-</ecNumber>
    </recommendedName>
</protein>
<accession>Q6GDN6</accession>
<sequence>MKWLSRILTVIVTMSMACGALIFNRRHQLKAKTLNFNHKALTIIIPARNEEKRIGHLLHSIIQQQVPVDVIVMNDGSTDETACVARSYGATVVDVVDDADGKWYGKSHACYQGVTHACTNRIAFVDADVTFLRKDAVEALINQYQLQGEKGLLSVQPYHITKRFYEGFSAIFNLMTVVGMNVFSTLDDGRTNQHAFGPVTLTNKEDYYATGGHKSANRHIIEGFALGSAYTSQSLPVTVYEGFPFVAFRMYQEGFQSLQEGWTKHLSTGAGGTKPKIMAAIVLWLFGSIASILGLCLSLKYRQMSVGKMLTVYLSYTTQFIYLHRRVGQFSNLLMVCHPLLFMFFTKIFIQSWKQTHRYGVVEWKGRQYSISKEQ</sequence>
<proteinExistence type="inferred from homology"/>
<feature type="chain" id="PRO_0000284860" description="4,4'-diaponeurosporenoate glycosyltransferase">
    <location>
        <begin position="1"/>
        <end position="375"/>
    </location>
</feature>
<feature type="transmembrane region" description="Helical" evidence="2">
    <location>
        <begin position="3"/>
        <end position="23"/>
    </location>
</feature>
<feature type="transmembrane region" description="Helical" evidence="2">
    <location>
        <begin position="164"/>
        <end position="184"/>
    </location>
</feature>
<feature type="transmembrane region" description="Helical" evidence="2">
    <location>
        <begin position="277"/>
        <end position="297"/>
    </location>
</feature>
<feature type="transmembrane region" description="Helical" evidence="2">
    <location>
        <begin position="330"/>
        <end position="350"/>
    </location>
</feature>
<dbReference type="EC" id="2.4.1.-"/>
<dbReference type="EMBL" id="BX571856">
    <property type="protein sequence ID" value="CAG41622.1"/>
    <property type="molecule type" value="Genomic_DNA"/>
</dbReference>
<dbReference type="RefSeq" id="WP_000871726.1">
    <property type="nucleotide sequence ID" value="NC_002952.2"/>
</dbReference>
<dbReference type="SMR" id="Q6GDN6"/>
<dbReference type="CAZy" id="GT2">
    <property type="family name" value="Glycosyltransferase Family 2"/>
</dbReference>
<dbReference type="KEGG" id="sar:SAR2645"/>
<dbReference type="HOGENOM" id="CLU_038143_1_0_9"/>
<dbReference type="UniPathway" id="UPA00029">
    <property type="reaction ID" value="UER00559"/>
</dbReference>
<dbReference type="Proteomes" id="UP000000596">
    <property type="component" value="Chromosome"/>
</dbReference>
<dbReference type="GO" id="GO:0005886">
    <property type="term" value="C:plasma membrane"/>
    <property type="evidence" value="ECO:0007669"/>
    <property type="project" value="UniProtKB-SubCell"/>
</dbReference>
<dbReference type="GO" id="GO:0016757">
    <property type="term" value="F:glycosyltransferase activity"/>
    <property type="evidence" value="ECO:0007669"/>
    <property type="project" value="UniProtKB-KW"/>
</dbReference>
<dbReference type="GO" id="GO:0016117">
    <property type="term" value="P:carotenoid biosynthetic process"/>
    <property type="evidence" value="ECO:0007669"/>
    <property type="project" value="UniProtKB-KW"/>
</dbReference>
<dbReference type="CDD" id="cd00761">
    <property type="entry name" value="Glyco_tranf_GTA_type"/>
    <property type="match status" value="1"/>
</dbReference>
<dbReference type="Gene3D" id="3.90.550.10">
    <property type="entry name" value="Spore Coat Polysaccharide Biosynthesis Protein SpsA, Chain A"/>
    <property type="match status" value="1"/>
</dbReference>
<dbReference type="InterPro" id="IPR001173">
    <property type="entry name" value="Glyco_trans_2-like"/>
</dbReference>
<dbReference type="InterPro" id="IPR029044">
    <property type="entry name" value="Nucleotide-diphossugar_trans"/>
</dbReference>
<dbReference type="PANTHER" id="PTHR43646">
    <property type="entry name" value="GLYCOSYLTRANSFERASE"/>
    <property type="match status" value="1"/>
</dbReference>
<dbReference type="PANTHER" id="PTHR43646:SF2">
    <property type="entry name" value="GLYCOSYLTRANSFERASE 2-LIKE DOMAIN-CONTAINING PROTEIN"/>
    <property type="match status" value="1"/>
</dbReference>
<dbReference type="Pfam" id="PF00535">
    <property type="entry name" value="Glycos_transf_2"/>
    <property type="match status" value="1"/>
</dbReference>
<dbReference type="SUPFAM" id="SSF53448">
    <property type="entry name" value="Nucleotide-diphospho-sugar transferases"/>
    <property type="match status" value="1"/>
</dbReference>
<gene>
    <name type="primary">crtQ</name>
    <name type="ordered locus">SAR2645</name>
</gene>
<comment type="function">
    <text evidence="1">Catalyzes the glycosylation of 4,4'-diaponeurosporenoate, i.e. the esterification of glucose at the C1'' position with the carboxyl group of 4,4'-diaponeurosporenic acid, to form glycosyl-4,4'-diaponeurosporenoate. This is a step in the biosynthesis of staphyloxanthin, an orange pigment present in most staphylococci strains (By similarity).</text>
</comment>
<comment type="pathway">
    <text>Carotenoid biosynthesis; staphyloxanthin biosynthesis; staphyloxanthin from farnesyl diphosphate: step 4/5.</text>
</comment>
<comment type="subcellular location">
    <subcellularLocation>
        <location evidence="3">Cell membrane</location>
        <topology evidence="3">Multi-pass membrane protein</topology>
    </subcellularLocation>
</comment>
<comment type="similarity">
    <text evidence="3">Belongs to the glycosyltransferase 2 family. CrtQ subfamily.</text>
</comment>
<organism>
    <name type="scientific">Staphylococcus aureus (strain MRSA252)</name>
    <dbReference type="NCBI Taxonomy" id="282458"/>
    <lineage>
        <taxon>Bacteria</taxon>
        <taxon>Bacillati</taxon>
        <taxon>Bacillota</taxon>
        <taxon>Bacilli</taxon>
        <taxon>Bacillales</taxon>
        <taxon>Staphylococcaceae</taxon>
        <taxon>Staphylococcus</taxon>
    </lineage>
</organism>
<name>CRTQ_STAAR</name>
<reference key="1">
    <citation type="journal article" date="2004" name="Proc. Natl. Acad. Sci. U.S.A.">
        <title>Complete genomes of two clinical Staphylococcus aureus strains: evidence for the rapid evolution of virulence and drug resistance.</title>
        <authorList>
            <person name="Holden M.T.G."/>
            <person name="Feil E.J."/>
            <person name="Lindsay J.A."/>
            <person name="Peacock S.J."/>
            <person name="Day N.P.J."/>
            <person name="Enright M.C."/>
            <person name="Foster T.J."/>
            <person name="Moore C.E."/>
            <person name="Hurst L."/>
            <person name="Atkin R."/>
            <person name="Barron A."/>
            <person name="Bason N."/>
            <person name="Bentley S.D."/>
            <person name="Chillingworth C."/>
            <person name="Chillingworth T."/>
            <person name="Churcher C."/>
            <person name="Clark L."/>
            <person name="Corton C."/>
            <person name="Cronin A."/>
            <person name="Doggett J."/>
            <person name="Dowd L."/>
            <person name="Feltwell T."/>
            <person name="Hance Z."/>
            <person name="Harris B."/>
            <person name="Hauser H."/>
            <person name="Holroyd S."/>
            <person name="Jagels K."/>
            <person name="James K.D."/>
            <person name="Lennard N."/>
            <person name="Line A."/>
            <person name="Mayes R."/>
            <person name="Moule S."/>
            <person name="Mungall K."/>
            <person name="Ormond D."/>
            <person name="Quail M.A."/>
            <person name="Rabbinowitsch E."/>
            <person name="Rutherford K.M."/>
            <person name="Sanders M."/>
            <person name="Sharp S."/>
            <person name="Simmonds M."/>
            <person name="Stevens K."/>
            <person name="Whitehead S."/>
            <person name="Barrell B.G."/>
            <person name="Spratt B.G."/>
            <person name="Parkhill J."/>
        </authorList>
    </citation>
    <scope>NUCLEOTIDE SEQUENCE [LARGE SCALE GENOMIC DNA]</scope>
    <source>
        <strain>MRSA252</strain>
    </source>
</reference>